<sequence>MATEHPEPPKAELQLPPPPPPGHYGAWAAQELQAKLAEIGAPIQGNREELVERLQSYTRQTGIVLNRPVLRGEDGDKAAPPPMSAQLPGIPMPPPPLGLPPLQPPPPPPPPPPGLGLGFPMAHPPNLGPPPPLRVGEPVALSEEERLKLAQQQAALLMQQEERAKQQGDHSLKEHELLEQQKRAAVLLEQERQQEIAKMGTPVPRPPQDMGQIGVRTPLGPRVAAPVGPVGPTPTVLPMGAPVPRPRGPPPPPGDENREMDDPSVGPKIPQALEKILQLKESRQEEMNSQQEEEEMETDARSSLGQSASETEEDTVSVSKKEKNRKRRNRKKKKKPQRVRGVSSESSGDREKDSTRSRGSDSPAADVEIEYVTEEPEIYEPNFIFFKRIFEAFKLTDDVKKEKEKEPEKLDKLENSAAPKKKGFEEEHKDSDDDSSDDEQEKKPEAPKLSKKKLRRMNRFTVAELKQLVARPDVVEMHDVTAQDPKLLVHLKATRNSVPVPRHWCFKRKYLQGKRGIEKPPFELPDFIKRTGIQEMREALQEKEEQKTMKSKMREKVRPKMGKIDIDYQKLHDAFFKWQTKPKLTIHGDLYYEGKEFETRLKEKKPGDLSDELRISLGMPVGPNAHKVPPPWLIAMQRYGPPPSYPNLKIPGLNSPIPESCSFGYHAGGWGKPPVDETGKPLYGDVFGTNAAEFQTKTEEEEIDRTPWGELEPSDEESSEEEEEEESDEDKPDETGFITPADSGLITPGGFSSVPAGMETPELIELRKKKIEEAMDGSETPQLFTVLPEKRTATVGGAMMGSTHIYDMSTVMSRKGPAPELQGVEVALAPEELELDPMAMTQKYEEHVREQQAQVEKEDFSDMVAEHAAKQKQKKRKAQPQDSRGGSKKYKEFKF</sequence>
<feature type="chain" id="PRO_0000174328" description="Splicing factor 3B subunit 2">
    <location>
        <begin position="1"/>
        <end position="895"/>
    </location>
</feature>
<feature type="domain" description="SAP" evidence="2">
    <location>
        <begin position="24"/>
        <end position="58"/>
    </location>
</feature>
<feature type="region of interest" description="Disordered" evidence="3">
    <location>
        <begin position="1"/>
        <end position="24"/>
    </location>
</feature>
<feature type="region of interest" description="Disordered" evidence="3">
    <location>
        <begin position="65"/>
        <end position="136"/>
    </location>
</feature>
<feature type="region of interest" description="Disordered" evidence="3">
    <location>
        <begin position="197"/>
        <end position="373"/>
    </location>
</feature>
<feature type="region of interest" description="Disordered" evidence="3">
    <location>
        <begin position="400"/>
        <end position="453"/>
    </location>
</feature>
<feature type="region of interest" description="Required for interaction with PRMT9" evidence="10">
    <location>
        <begin position="401"/>
        <end position="550"/>
    </location>
</feature>
<feature type="region of interest" description="Disordered" evidence="3">
    <location>
        <begin position="691"/>
        <end position="757"/>
    </location>
</feature>
<feature type="region of interest" description="Disordered" evidence="3">
    <location>
        <begin position="844"/>
        <end position="895"/>
    </location>
</feature>
<feature type="coiled-coil region" evidence="1">
    <location>
        <begin position="140"/>
        <end position="199"/>
    </location>
</feature>
<feature type="compositionally biased region" description="Basic and acidic residues" evidence="3">
    <location>
        <begin position="1"/>
        <end position="10"/>
    </location>
</feature>
<feature type="compositionally biased region" description="Pro residues" evidence="3">
    <location>
        <begin position="90"/>
        <end position="114"/>
    </location>
</feature>
<feature type="compositionally biased region" description="Pro residues" evidence="3">
    <location>
        <begin position="122"/>
        <end position="133"/>
    </location>
</feature>
<feature type="compositionally biased region" description="Low complexity" evidence="3">
    <location>
        <begin position="218"/>
        <end position="238"/>
    </location>
</feature>
<feature type="compositionally biased region" description="Pro residues" evidence="3">
    <location>
        <begin position="241"/>
        <end position="254"/>
    </location>
</feature>
<feature type="compositionally biased region" description="Basic and acidic residues" evidence="3">
    <location>
        <begin position="277"/>
        <end position="286"/>
    </location>
</feature>
<feature type="compositionally biased region" description="Basic residues" evidence="3">
    <location>
        <begin position="322"/>
        <end position="338"/>
    </location>
</feature>
<feature type="compositionally biased region" description="Basic and acidic residues" evidence="3">
    <location>
        <begin position="347"/>
        <end position="359"/>
    </location>
</feature>
<feature type="compositionally biased region" description="Basic and acidic residues" evidence="3">
    <location>
        <begin position="400"/>
        <end position="414"/>
    </location>
</feature>
<feature type="compositionally biased region" description="Basic and acidic residues" evidence="3">
    <location>
        <begin position="422"/>
        <end position="431"/>
    </location>
</feature>
<feature type="compositionally biased region" description="Acidic residues" evidence="3">
    <location>
        <begin position="712"/>
        <end position="732"/>
    </location>
</feature>
<feature type="compositionally biased region" description="Basic and acidic residues" evidence="3">
    <location>
        <begin position="844"/>
        <end position="869"/>
    </location>
</feature>
<feature type="modified residue" description="Omega-N-methylarginine" evidence="37">
    <location>
        <position position="222"/>
    </location>
</feature>
<feature type="modified residue" description="Omega-N-methylarginine" evidence="37">
    <location>
        <position position="245"/>
    </location>
</feature>
<feature type="modified residue" description="Omega-N-methylarginine" evidence="37">
    <location>
        <position position="247"/>
    </location>
</feature>
<feature type="modified residue" description="N6-acetyllysine" evidence="32">
    <location>
        <position position="275"/>
    </location>
</feature>
<feature type="modified residue" description="Phosphoserine" evidence="29 31 36">
    <location>
        <position position="289"/>
    </location>
</feature>
<feature type="modified residue" description="Phosphothreonine" evidence="36">
    <location>
        <position position="298"/>
    </location>
</feature>
<feature type="modified residue" description="Phosphoserine" evidence="31 33 34 36">
    <location>
        <position position="307"/>
    </location>
</feature>
<feature type="modified residue" description="Phosphoserine" evidence="31 33 34 36">
    <location>
        <position position="309"/>
    </location>
</feature>
<feature type="modified residue" description="Phosphothreonine" evidence="31 36 38">
    <location>
        <position position="311"/>
    </location>
</feature>
<feature type="modified residue" description="Phosphoserine" evidence="36">
    <location>
        <position position="317"/>
    </location>
</feature>
<feature type="modified residue" description="Phosphoserine" evidence="33">
    <location>
        <position position="360"/>
    </location>
</feature>
<feature type="modified residue" description="Phosphoserine" evidence="33">
    <location>
        <position position="362"/>
    </location>
</feature>
<feature type="modified residue" description="Phosphoserine" evidence="28 30 34 35 36 38">
    <location>
        <position position="431"/>
    </location>
</feature>
<feature type="modified residue" description="Phosphoserine" evidence="28 30 34 35 36 38">
    <location>
        <position position="435"/>
    </location>
</feature>
<feature type="modified residue" description="Phosphoserine" evidence="28 30 34 35 36 38">
    <location>
        <position position="436"/>
    </location>
</feature>
<feature type="modified residue" description="Omega-N-methylarginine; by PRMT9; alternate" evidence="10">
    <location>
        <position position="508"/>
    </location>
</feature>
<feature type="modified residue" description="Symmetric dimethylarginine; by PRMT9; alternate" evidence="10">
    <location>
        <position position="508"/>
    </location>
</feature>
<feature type="modified residue" description="Omega-N-methylarginine" evidence="37">
    <location>
        <position position="515"/>
    </location>
</feature>
<feature type="modified residue" description="Phosphothreonine" evidence="31 33 34 36">
    <location>
        <position position="780"/>
    </location>
</feature>
<feature type="modified residue" description="Phosphoserine" evidence="36">
    <location>
        <position position="861"/>
    </location>
</feature>
<feature type="cross-link" description="Glycyl lysine isopeptide (Lys-Gly) (interchain with G-Cter in SUMO2)" evidence="42">
    <location>
        <position position="10"/>
    </location>
</feature>
<feature type="cross-link" description="Glycyl lysine isopeptide (Lys-Gly) (interchain with G-Cter in SUMO2)" evidence="42">
    <location>
        <position position="280"/>
    </location>
</feature>
<feature type="cross-link" description="Glycyl lysine isopeptide (Lys-Gly) (interchain with G-Cter in SUMO2)" evidence="40 41 42">
    <location>
        <position position="400"/>
    </location>
</feature>
<feature type="cross-link" description="Glycyl lysine isopeptide (Lys-Gly) (interchain with G-Cter in SUMO2)" evidence="39 42">
    <location>
        <position position="412"/>
    </location>
</feature>
<feature type="cross-link" description="Glycyl lysine isopeptide (Lys-Gly) (interchain with G-Cter in SUMO2)" evidence="42">
    <location>
        <position position="492"/>
    </location>
</feature>
<feature type="cross-link" description="Glycyl lysine isopeptide (Lys-Gly) (interchain with G-Cter in SUMO2)" evidence="42">
    <location>
        <position position="543"/>
    </location>
</feature>
<feature type="cross-link" description="Glycyl lysine isopeptide (Lys-Gly) (interchain with G-Cter in SUMO2)" evidence="42">
    <location>
        <position position="770"/>
    </location>
</feature>
<feature type="cross-link" description="Glycyl lysine isopeptide (Lys-Gly) (interchain with G-Cter in SUMO2)" evidence="42">
    <location>
        <position position="790"/>
    </location>
</feature>
<feature type="cross-link" description="Glycyl lysine isopeptide (Lys-Gly) (interchain with G-Cter in SUMO2)" evidence="42">
    <location>
        <position position="843"/>
    </location>
</feature>
<feature type="cross-link" description="Glycyl lysine isopeptide (Lys-Gly) (interchain with G-Cter in SUMO2)" evidence="42">
    <location>
        <position position="857"/>
    </location>
</feature>
<feature type="sequence variant" id="VAR_087086" description="In CFM1." evidence="18">
    <location>
        <begin position="103"/>
        <end position="895"/>
    </location>
</feature>
<feature type="sequence variant" id="VAR_087087" description="In CFM1." evidence="18">
    <location>
        <begin position="638"/>
        <end position="895"/>
    </location>
</feature>
<feature type="mutagenesis site" description="Does not affect methylation by PRMT9." evidence="10">
    <original>R</original>
    <variation>K</variation>
    <location>
        <position position="471"/>
    </location>
</feature>
<feature type="mutagenesis site" description="Does not affect methylation by PRMT9." evidence="10">
    <original>R</original>
    <variation>K</variation>
    <location>
        <position position="495"/>
    </location>
</feature>
<feature type="mutagenesis site" description="Does not affect methylation by PRMT9." evidence="10">
    <original>R</original>
    <variation>K</variation>
    <location>
        <position position="502"/>
    </location>
</feature>
<feature type="mutagenesis site" description="Does not affect methylation by PRMT9; when associated with A-510." evidence="11">
    <original>F</original>
    <variation>A</variation>
    <location>
        <position position="506"/>
    </location>
</feature>
<feature type="mutagenesis site" description="Moderately diminished formation of omega-N monomethylarginine but greatly reduced formation of symmetrical dimethylarginine; when associated with A-509." evidence="11">
    <original>K</original>
    <variation>A</variation>
    <location>
        <position position="507"/>
    </location>
</feature>
<feature type="mutagenesis site" description="Moderately diminished formation of omega-N monomethylarginine but greatly reduced formation of symmetrical dimethylarginine; when associated with R-509. Abolishes formation of omega-N monomethylarginine and formation of symmetrical dimethylarginine; when associated with R-508. Abolishes formation of omega-N monomethylarginine and formation of symmetrical dimethylarginine; when associated with K-508 and R-509." evidence="11">
    <original>K</original>
    <variation>R</variation>
    <location>
        <position position="507"/>
    </location>
</feature>
<feature type="mutagenesis site" description="Abolishes interaction with SMN1; Abolishes methylation by PRMT9. Abolishes formation of omega-N monomethylarginine and formation of symmetrical dimethylarginine; when associated with R-507. Abolishes formation of omega-N monomethylarginine and formation of symmetrical dimethylarginine; when associated with R-507. Abolishes formation of omega-N monomethylarginine and formation of symmetrical dimethylarginine; when associated with R-507 and R-509." evidence="10 11">
    <original>R</original>
    <variation>K</variation>
    <location>
        <position position="508"/>
    </location>
</feature>
<feature type="mutagenesis site" description="Moderately diminished formation of omega-N monomethylarginine but greatly reduced formation of symmetrical dimethylarginine; when associated with A-507." evidence="10">
    <original>K</original>
    <variation>A</variation>
    <location>
        <position position="509"/>
    </location>
</feature>
<feature type="mutagenesis site" description="Moderately diminished formation of omega-N monomethylarginine but greatly reduced formation of symmetrical dimethylarginine; when associated with R-507. Abolishes formation of omega-N monomethylarginine and formation of symmetrical dimethylarginine; when associated with K-508 and R-507." evidence="10">
    <original>K</original>
    <variation>R</variation>
    <location>
        <position position="509"/>
    </location>
</feature>
<feature type="mutagenesis site" description="Does not affect methylation by PRMT9; when associated with A-506." evidence="11">
    <original>Y</original>
    <variation>A</variation>
    <location>
        <position position="510"/>
    </location>
</feature>
<feature type="mutagenesis site" description="Does not affect methylation by PRMT9." evidence="10">
    <original>R</original>
    <variation>K</variation>
    <location>
        <position position="515"/>
    </location>
</feature>
<feature type="mutagenesis site" description="Does not affect methylation by PRMT9." evidence="10">
    <original>R</original>
    <variation>K</variation>
    <location>
        <position position="530"/>
    </location>
</feature>
<feature type="mutagenesis site" description="Does not affect methylation by PRMT9." evidence="10">
    <original>R</original>
    <variation>K</variation>
    <location>
        <position position="537"/>
    </location>
</feature>
<feature type="sequence conflict" description="In Ref. 1; BAF83539." evidence="21" ref="1">
    <original>K</original>
    <variation>E</variation>
    <location>
        <position position="602"/>
    </location>
</feature>
<feature type="sequence conflict" description="In Ref. 1; BAF83539." evidence="21" ref="1">
    <original>E</original>
    <variation>G</variation>
    <location>
        <position position="765"/>
    </location>
</feature>
<feature type="helix" evidence="43">
    <location>
        <begin position="29"/>
        <end position="39"/>
    </location>
</feature>
<feature type="helix" evidence="43">
    <location>
        <begin position="47"/>
        <end position="61"/>
    </location>
</feature>
<feature type="helix" evidence="47">
    <location>
        <begin position="454"/>
        <end position="457"/>
    </location>
</feature>
<feature type="helix" evidence="48">
    <location>
        <begin position="462"/>
        <end position="468"/>
    </location>
</feature>
<feature type="helix" evidence="48">
    <location>
        <begin position="472"/>
        <end position="474"/>
    </location>
</feature>
<feature type="helix" evidence="48">
    <location>
        <begin position="479"/>
        <end position="481"/>
    </location>
</feature>
<feature type="strand" evidence="48">
    <location>
        <begin position="482"/>
        <end position="484"/>
    </location>
</feature>
<feature type="helix" evidence="48">
    <location>
        <begin position="485"/>
        <end position="493"/>
    </location>
</feature>
<feature type="strand" evidence="45">
    <location>
        <begin position="494"/>
        <end position="496"/>
    </location>
</feature>
<feature type="helix" evidence="48">
    <location>
        <begin position="502"/>
        <end position="505"/>
    </location>
</feature>
<feature type="turn" evidence="48">
    <location>
        <begin position="510"/>
        <end position="513"/>
    </location>
</feature>
<feature type="helix" evidence="44">
    <location>
        <begin position="514"/>
        <end position="518"/>
    </location>
</feature>
<feature type="helix" evidence="48">
    <location>
        <begin position="526"/>
        <end position="529"/>
    </location>
</feature>
<feature type="turn" evidence="48">
    <location>
        <begin position="530"/>
        <end position="532"/>
    </location>
</feature>
<feature type="helix" evidence="48">
    <location>
        <begin position="533"/>
        <end position="536"/>
    </location>
</feature>
<feature type="turn" evidence="44">
    <location>
        <begin position="544"/>
        <end position="546"/>
    </location>
</feature>
<feature type="helix" evidence="44">
    <location>
        <begin position="549"/>
        <end position="554"/>
    </location>
</feature>
<feature type="turn" evidence="44">
    <location>
        <begin position="555"/>
        <end position="557"/>
    </location>
</feature>
<feature type="helix" evidence="48">
    <location>
        <begin position="568"/>
        <end position="576"/>
    </location>
</feature>
<feature type="turn" evidence="48">
    <location>
        <begin position="593"/>
        <end position="597"/>
    </location>
</feature>
<feature type="helix" evidence="45">
    <location>
        <begin position="611"/>
        <end position="617"/>
    </location>
</feature>
<feature type="strand" evidence="45">
    <location>
        <begin position="624"/>
        <end position="626"/>
    </location>
</feature>
<feature type="helix" evidence="45">
    <location>
        <begin position="633"/>
        <end position="639"/>
    </location>
</feature>
<feature type="turn" evidence="45">
    <location>
        <begin position="652"/>
        <end position="654"/>
    </location>
</feature>
<feature type="turn" evidence="46">
    <location>
        <begin position="657"/>
        <end position="659"/>
    </location>
</feature>
<feature type="helix" evidence="44">
    <location>
        <begin position="692"/>
        <end position="702"/>
    </location>
</feature>
<accession>Q13435</accession>
<accession>A8K485</accession>
<accession>B4DT19</accession>
<accession>Q7L4T5</accession>
<accession>Q7Z627</accession>
<accession>Q969K1</accession>
<accession>Q96CM6</accession>
<accession>Q9BWD2</accession>
<gene>
    <name type="primary">SF3B2</name>
    <name type="synonym">SAP145</name>
</gene>
<keyword id="KW-0002">3D-structure</keyword>
<keyword id="KW-0007">Acetylation</keyword>
<keyword id="KW-0175">Coiled coil</keyword>
<keyword id="KW-0903">Direct protein sequencing</keyword>
<keyword id="KW-0225">Disease variant</keyword>
<keyword id="KW-0945">Host-virus interaction</keyword>
<keyword id="KW-1017">Isopeptide bond</keyword>
<keyword id="KW-0488">Methylation</keyword>
<keyword id="KW-0507">mRNA processing</keyword>
<keyword id="KW-0508">mRNA splicing</keyword>
<keyword id="KW-0539">Nucleus</keyword>
<keyword id="KW-0597">Phosphoprotein</keyword>
<keyword id="KW-1267">Proteomics identification</keyword>
<keyword id="KW-1185">Reference proteome</keyword>
<keyword id="KW-0747">Spliceosome</keyword>
<keyword id="KW-0832">Ubl conjugation</keyword>
<organism>
    <name type="scientific">Homo sapiens</name>
    <name type="common">Human</name>
    <dbReference type="NCBI Taxonomy" id="9606"/>
    <lineage>
        <taxon>Eukaryota</taxon>
        <taxon>Metazoa</taxon>
        <taxon>Chordata</taxon>
        <taxon>Craniata</taxon>
        <taxon>Vertebrata</taxon>
        <taxon>Euteleostomi</taxon>
        <taxon>Mammalia</taxon>
        <taxon>Eutheria</taxon>
        <taxon>Euarchontoglires</taxon>
        <taxon>Primates</taxon>
        <taxon>Haplorrhini</taxon>
        <taxon>Catarrhini</taxon>
        <taxon>Hominidae</taxon>
        <taxon>Homo</taxon>
    </lineage>
</organism>
<dbReference type="EMBL" id="AK290850">
    <property type="protein sequence ID" value="BAF83539.1"/>
    <property type="molecule type" value="mRNA"/>
</dbReference>
<dbReference type="EMBL" id="AK300016">
    <property type="protein sequence ID" value="BAG61831.1"/>
    <property type="status" value="ALT_INIT"/>
    <property type="molecule type" value="mRNA"/>
</dbReference>
<dbReference type="EMBL" id="BC000401">
    <property type="protein sequence ID" value="AAH00401.2"/>
    <property type="molecule type" value="mRNA"/>
</dbReference>
<dbReference type="EMBL" id="BC007610">
    <property type="protein sequence ID" value="AAH07610.1"/>
    <property type="molecule type" value="mRNA"/>
</dbReference>
<dbReference type="EMBL" id="BC014125">
    <property type="protein sequence ID" value="AAH14125.2"/>
    <property type="molecule type" value="mRNA"/>
</dbReference>
<dbReference type="EMBL" id="BC053577">
    <property type="protein sequence ID" value="AAH53577.1"/>
    <property type="status" value="ALT_SEQ"/>
    <property type="molecule type" value="mRNA"/>
</dbReference>
<dbReference type="EMBL" id="U41371">
    <property type="protein sequence ID" value="AAA97461.1"/>
    <property type="status" value="ALT_FRAME"/>
    <property type="molecule type" value="mRNA"/>
</dbReference>
<dbReference type="CCDS" id="CCDS31612.1"/>
<dbReference type="RefSeq" id="NP_006833.2">
    <property type="nucleotide sequence ID" value="NM_006842.2"/>
</dbReference>
<dbReference type="PDB" id="2DO5">
    <property type="method" value="NMR"/>
    <property type="chains" value="A=24-68"/>
</dbReference>
<dbReference type="PDB" id="5Z56">
    <property type="method" value="EM"/>
    <property type="resolution" value="5.10 A"/>
    <property type="chains" value="2=1-895"/>
</dbReference>
<dbReference type="PDB" id="5Z57">
    <property type="method" value="EM"/>
    <property type="resolution" value="6.50 A"/>
    <property type="chains" value="2=1-895"/>
</dbReference>
<dbReference type="PDB" id="5Z58">
    <property type="method" value="EM"/>
    <property type="resolution" value="4.90 A"/>
    <property type="chains" value="2=1-895"/>
</dbReference>
<dbReference type="PDB" id="6AH0">
    <property type="method" value="EM"/>
    <property type="resolution" value="5.70 A"/>
    <property type="chains" value="2=1-895"/>
</dbReference>
<dbReference type="PDB" id="6AHD">
    <property type="method" value="EM"/>
    <property type="resolution" value="3.80 A"/>
    <property type="chains" value="2=1-895"/>
</dbReference>
<dbReference type="PDB" id="6FF4">
    <property type="method" value="EM"/>
    <property type="resolution" value="16.00 A"/>
    <property type="chains" value="8=1-895"/>
</dbReference>
<dbReference type="PDB" id="6FF7">
    <property type="method" value="EM"/>
    <property type="resolution" value="4.50 A"/>
    <property type="chains" value="8=1-895"/>
</dbReference>
<dbReference type="PDB" id="6QX9">
    <property type="method" value="EM"/>
    <property type="resolution" value="3.28 A"/>
    <property type="chains" value="B2=1-895"/>
</dbReference>
<dbReference type="PDB" id="6Y50">
    <property type="method" value="EM"/>
    <property type="resolution" value="4.10 A"/>
    <property type="chains" value="8=1-895"/>
</dbReference>
<dbReference type="PDB" id="6Y53">
    <property type="method" value="EM"/>
    <property type="resolution" value="7.10 A"/>
    <property type="chains" value="8=1-895"/>
</dbReference>
<dbReference type="PDB" id="6Y5Q">
    <property type="method" value="EM"/>
    <property type="resolution" value="7.10 A"/>
    <property type="chains" value="8=1-895"/>
</dbReference>
<dbReference type="PDB" id="7ABG">
    <property type="method" value="EM"/>
    <property type="resolution" value="7.80 A"/>
    <property type="chains" value="T=1-895"/>
</dbReference>
<dbReference type="PDB" id="7ABH">
    <property type="method" value="EM"/>
    <property type="resolution" value="4.50 A"/>
    <property type="chains" value="T=1-895"/>
</dbReference>
<dbReference type="PDB" id="7ABI">
    <property type="method" value="EM"/>
    <property type="resolution" value="8.00 A"/>
    <property type="chains" value="T=1-895"/>
</dbReference>
<dbReference type="PDB" id="7DVQ">
    <property type="method" value="EM"/>
    <property type="resolution" value="2.89 A"/>
    <property type="chains" value="2=1-895"/>
</dbReference>
<dbReference type="PDB" id="7EVO">
    <property type="method" value="EM"/>
    <property type="resolution" value="2.50 A"/>
    <property type="chains" value="2=1-895"/>
</dbReference>
<dbReference type="PDB" id="7ONB">
    <property type="method" value="EM"/>
    <property type="resolution" value="3.10 A"/>
    <property type="chains" value="I=1-895"/>
</dbReference>
<dbReference type="PDB" id="7Q3L">
    <property type="method" value="EM"/>
    <property type="resolution" value="2.30 A"/>
    <property type="chains" value="B=1-895"/>
</dbReference>
<dbReference type="PDB" id="7Q4O">
    <property type="method" value="EM"/>
    <property type="resolution" value="2.20 A"/>
    <property type="chains" value="B=1-895"/>
</dbReference>
<dbReference type="PDB" id="7Q4P">
    <property type="method" value="EM"/>
    <property type="resolution" value="2.20 A"/>
    <property type="chains" value="B=1-895"/>
</dbReference>
<dbReference type="PDB" id="7QTT">
    <property type="method" value="EM"/>
    <property type="resolution" value="3.10 A"/>
    <property type="chains" value="E=1-895"/>
</dbReference>
<dbReference type="PDB" id="7VPX">
    <property type="method" value="EM"/>
    <property type="resolution" value="3.00 A"/>
    <property type="chains" value="2=1-895"/>
</dbReference>
<dbReference type="PDB" id="8CH6">
    <property type="method" value="EM"/>
    <property type="resolution" value="5.90 A"/>
    <property type="chains" value="E=1-895"/>
</dbReference>
<dbReference type="PDB" id="8H6E">
    <property type="method" value="EM"/>
    <property type="resolution" value="3.20 A"/>
    <property type="chains" value="2H=1-895"/>
</dbReference>
<dbReference type="PDB" id="8H6J">
    <property type="method" value="EM"/>
    <property type="resolution" value="3.25 A"/>
    <property type="chains" value="2H=1-895"/>
</dbReference>
<dbReference type="PDB" id="8H6K">
    <property type="method" value="EM"/>
    <property type="resolution" value="2.70 A"/>
    <property type="chains" value="2H=1-895"/>
</dbReference>
<dbReference type="PDB" id="8H6L">
    <property type="method" value="EM"/>
    <property type="resolution" value="2.60 A"/>
    <property type="chains" value="2H=1-895"/>
</dbReference>
<dbReference type="PDB" id="8HK1">
    <property type="method" value="EM"/>
    <property type="resolution" value="2.70 A"/>
    <property type="chains" value="2=1-895"/>
</dbReference>
<dbReference type="PDB" id="8I0P">
    <property type="method" value="EM"/>
    <property type="resolution" value="3.40 A"/>
    <property type="chains" value="2=1-895"/>
</dbReference>
<dbReference type="PDB" id="8I0R">
    <property type="method" value="EM"/>
    <property type="resolution" value="3.00 A"/>
    <property type="chains" value="2=1-895"/>
</dbReference>
<dbReference type="PDB" id="8I0S">
    <property type="method" value="EM"/>
    <property type="resolution" value="4.20 A"/>
    <property type="chains" value="2=1-895"/>
</dbReference>
<dbReference type="PDB" id="8I0T">
    <property type="method" value="EM"/>
    <property type="resolution" value="3.00 A"/>
    <property type="chains" value="2=1-895"/>
</dbReference>
<dbReference type="PDB" id="8I0U">
    <property type="method" value="EM"/>
    <property type="resolution" value="3.30 A"/>
    <property type="chains" value="2=1-895"/>
</dbReference>
<dbReference type="PDB" id="8I0V">
    <property type="method" value="EM"/>
    <property type="resolution" value="3.00 A"/>
    <property type="chains" value="2=1-895"/>
</dbReference>
<dbReference type="PDB" id="8QO9">
    <property type="method" value="EM"/>
    <property type="resolution" value="5.29 A"/>
    <property type="chains" value="B2=1-895"/>
</dbReference>
<dbReference type="PDB" id="8QXD">
    <property type="method" value="EM"/>
    <property type="resolution" value="9.60 A"/>
    <property type="chains" value="B2=1-895"/>
</dbReference>
<dbReference type="PDB" id="8QZS">
    <property type="method" value="EM"/>
    <property type="resolution" value="4.10 A"/>
    <property type="chains" value="B2=1-895"/>
</dbReference>
<dbReference type="PDB" id="8R08">
    <property type="method" value="EM"/>
    <property type="resolution" value="6.10 A"/>
    <property type="chains" value="B2=1-895"/>
</dbReference>
<dbReference type="PDB" id="8R09">
    <property type="method" value="EM"/>
    <property type="resolution" value="4.30 A"/>
    <property type="chains" value="B2=1-895"/>
</dbReference>
<dbReference type="PDB" id="8R0A">
    <property type="method" value="EM"/>
    <property type="resolution" value="5.80 A"/>
    <property type="chains" value="B2=1-895"/>
</dbReference>
<dbReference type="PDB" id="8R0B">
    <property type="method" value="EM"/>
    <property type="resolution" value="4.40 A"/>
    <property type="chains" value="B2=1-895"/>
</dbReference>
<dbReference type="PDB" id="8RM5">
    <property type="method" value="EM"/>
    <property type="resolution" value="6.90 A"/>
    <property type="chains" value="B2=1-895"/>
</dbReference>
<dbReference type="PDB" id="8Y7E">
    <property type="method" value="EM"/>
    <property type="resolution" value="4.66 A"/>
    <property type="chains" value="2=1-895"/>
</dbReference>
<dbReference type="PDBsum" id="2DO5"/>
<dbReference type="PDBsum" id="5Z56"/>
<dbReference type="PDBsum" id="5Z57"/>
<dbReference type="PDBsum" id="5Z58"/>
<dbReference type="PDBsum" id="6AH0"/>
<dbReference type="PDBsum" id="6AHD"/>
<dbReference type="PDBsum" id="6FF4"/>
<dbReference type="PDBsum" id="6FF7"/>
<dbReference type="PDBsum" id="6QX9"/>
<dbReference type="PDBsum" id="6Y50"/>
<dbReference type="PDBsum" id="6Y53"/>
<dbReference type="PDBsum" id="6Y5Q"/>
<dbReference type="PDBsum" id="7ABG"/>
<dbReference type="PDBsum" id="7ABH"/>
<dbReference type="PDBsum" id="7ABI"/>
<dbReference type="PDBsum" id="7DVQ"/>
<dbReference type="PDBsum" id="7EVO"/>
<dbReference type="PDBsum" id="7ONB"/>
<dbReference type="PDBsum" id="7Q3L"/>
<dbReference type="PDBsum" id="7Q4O"/>
<dbReference type="PDBsum" id="7Q4P"/>
<dbReference type="PDBsum" id="7QTT"/>
<dbReference type="PDBsum" id="7VPX"/>
<dbReference type="PDBsum" id="8CH6"/>
<dbReference type="PDBsum" id="8H6E"/>
<dbReference type="PDBsum" id="8H6J"/>
<dbReference type="PDBsum" id="8H6K"/>
<dbReference type="PDBsum" id="8H6L"/>
<dbReference type="PDBsum" id="8HK1"/>
<dbReference type="PDBsum" id="8I0P"/>
<dbReference type="PDBsum" id="8I0R"/>
<dbReference type="PDBsum" id="8I0S"/>
<dbReference type="PDBsum" id="8I0T"/>
<dbReference type="PDBsum" id="8I0U"/>
<dbReference type="PDBsum" id="8I0V"/>
<dbReference type="PDBsum" id="8QO9"/>
<dbReference type="PDBsum" id="8QXD"/>
<dbReference type="PDBsum" id="8QZS"/>
<dbReference type="PDBsum" id="8R08"/>
<dbReference type="PDBsum" id="8R09"/>
<dbReference type="PDBsum" id="8R0A"/>
<dbReference type="PDBsum" id="8R0B"/>
<dbReference type="PDBsum" id="8RM5"/>
<dbReference type="PDBsum" id="8Y7E"/>
<dbReference type="EMDB" id="EMD-10688"/>
<dbReference type="EMDB" id="EMD-10689"/>
<dbReference type="EMDB" id="EMD-11695"/>
<dbReference type="EMDB" id="EMD-11696"/>
<dbReference type="EMDB" id="EMD-11697"/>
<dbReference type="EMDB" id="EMD-12994"/>
<dbReference type="EMDB" id="EMD-13793"/>
<dbReference type="EMDB" id="EMD-13811"/>
<dbReference type="EMDB" id="EMD-13812"/>
<dbReference type="EMDB" id="EMD-14146"/>
<dbReference type="EMDB" id="EMD-16658"/>
<dbReference type="EMDB" id="EMD-18529"/>
<dbReference type="EMDB" id="EMD-18718"/>
<dbReference type="EMDB" id="EMD-18781"/>
<dbReference type="EMDB" id="EMD-18786"/>
<dbReference type="EMDB" id="EMD-18787"/>
<dbReference type="EMDB" id="EMD-18788"/>
<dbReference type="EMDB" id="EMD-18789"/>
<dbReference type="EMDB" id="EMD-19349"/>
<dbReference type="EMDB" id="EMD-30875"/>
<dbReference type="EMDB" id="EMD-31334"/>
<dbReference type="EMDB" id="EMD-32074"/>
<dbReference type="EMDB" id="EMD-34500"/>
<dbReference type="EMDB" id="EMD-34505"/>
<dbReference type="EMDB" id="EMD-34507"/>
<dbReference type="EMDB" id="EMD-34508"/>
<dbReference type="EMDB" id="EMD-34841"/>
<dbReference type="EMDB" id="EMD-35105"/>
<dbReference type="EMDB" id="EMD-35107"/>
<dbReference type="EMDB" id="EMD-35108"/>
<dbReference type="EMDB" id="EMD-35109"/>
<dbReference type="EMDB" id="EMD-35110"/>
<dbReference type="EMDB" id="EMD-35111"/>
<dbReference type="EMDB" id="EMD-39013"/>
<dbReference type="EMDB" id="EMD-4255"/>
<dbReference type="EMDB" id="EMD-4665"/>
<dbReference type="EMDB" id="EMD-6889"/>
<dbReference type="EMDB" id="EMD-6890"/>
<dbReference type="EMDB" id="EMD-6891"/>
<dbReference type="EMDB" id="EMD-9621"/>
<dbReference type="EMDB" id="EMD-9624"/>
<dbReference type="SMR" id="Q13435"/>
<dbReference type="BioGRID" id="116188">
    <property type="interactions" value="534"/>
</dbReference>
<dbReference type="ComplexPortal" id="CPX-2227">
    <property type="entry name" value="SF3B complex"/>
</dbReference>
<dbReference type="ComplexPortal" id="CPX-2539">
    <property type="entry name" value="U2 small nuclear ribonucleoprotein complex"/>
</dbReference>
<dbReference type="CORUM" id="Q13435"/>
<dbReference type="FunCoup" id="Q13435">
    <property type="interactions" value="3917"/>
</dbReference>
<dbReference type="IntAct" id="Q13435">
    <property type="interactions" value="213"/>
</dbReference>
<dbReference type="MINT" id="Q13435"/>
<dbReference type="STRING" id="9606.ENSP00000318861"/>
<dbReference type="ChEMBL" id="CHEMBL1229011"/>
<dbReference type="GlyGen" id="Q13435">
    <property type="glycosylation" value="2 sites, 1 O-linked glycan (1 site)"/>
</dbReference>
<dbReference type="iPTMnet" id="Q13435"/>
<dbReference type="MetOSite" id="Q13435"/>
<dbReference type="PhosphoSitePlus" id="Q13435"/>
<dbReference type="SwissPalm" id="Q13435"/>
<dbReference type="BioMuta" id="SF3B2"/>
<dbReference type="DMDM" id="296452908"/>
<dbReference type="jPOST" id="Q13435"/>
<dbReference type="MassIVE" id="Q13435"/>
<dbReference type="PaxDb" id="9606-ENSP00000318861"/>
<dbReference type="PeptideAtlas" id="Q13435"/>
<dbReference type="ProteomicsDB" id="59431"/>
<dbReference type="Pumba" id="Q13435"/>
<dbReference type="TopDownProteomics" id="Q13435"/>
<dbReference type="Antibodypedia" id="30058">
    <property type="antibodies" value="225 antibodies from 27 providers"/>
</dbReference>
<dbReference type="DNASU" id="10992"/>
<dbReference type="Ensembl" id="ENST00000322535.11">
    <property type="protein sequence ID" value="ENSP00000318861.6"/>
    <property type="gene ID" value="ENSG00000087365.16"/>
</dbReference>
<dbReference type="GeneID" id="10992"/>
<dbReference type="KEGG" id="hsa:10992"/>
<dbReference type="MANE-Select" id="ENST00000322535.11">
    <property type="protein sequence ID" value="ENSP00000318861.6"/>
    <property type="RefSeq nucleotide sequence ID" value="NM_006842.3"/>
    <property type="RefSeq protein sequence ID" value="NP_006833.2"/>
</dbReference>
<dbReference type="UCSC" id="uc001ogy.2">
    <property type="organism name" value="human"/>
</dbReference>
<dbReference type="AGR" id="HGNC:10769"/>
<dbReference type="CTD" id="10992"/>
<dbReference type="DisGeNET" id="10992"/>
<dbReference type="GeneCards" id="SF3B2"/>
<dbReference type="HGNC" id="HGNC:10769">
    <property type="gene designation" value="SF3B2"/>
</dbReference>
<dbReference type="HPA" id="ENSG00000087365">
    <property type="expression patterns" value="Low tissue specificity"/>
</dbReference>
<dbReference type="MalaCards" id="SF3B2"/>
<dbReference type="MIM" id="164210">
    <property type="type" value="phenotype"/>
</dbReference>
<dbReference type="MIM" id="605591">
    <property type="type" value="gene"/>
</dbReference>
<dbReference type="neXtProt" id="NX_Q13435"/>
<dbReference type="OpenTargets" id="ENSG00000087365"/>
<dbReference type="PharmGKB" id="PA35687"/>
<dbReference type="VEuPathDB" id="HostDB:ENSG00000087365"/>
<dbReference type="eggNOG" id="KOG2330">
    <property type="taxonomic scope" value="Eukaryota"/>
</dbReference>
<dbReference type="GeneTree" id="ENSGT00390000006734"/>
<dbReference type="InParanoid" id="Q13435"/>
<dbReference type="OMA" id="KGEPIGQ"/>
<dbReference type="OrthoDB" id="10260794at2759"/>
<dbReference type="PAN-GO" id="Q13435">
    <property type="GO annotations" value="6 GO annotations based on evolutionary models"/>
</dbReference>
<dbReference type="PhylomeDB" id="Q13435"/>
<dbReference type="TreeFam" id="TF300635"/>
<dbReference type="PathwayCommons" id="Q13435"/>
<dbReference type="Reactome" id="R-HSA-72163">
    <property type="pathway name" value="mRNA Splicing - Major Pathway"/>
</dbReference>
<dbReference type="Reactome" id="R-HSA-72165">
    <property type="pathway name" value="mRNA Splicing - Minor Pathway"/>
</dbReference>
<dbReference type="SignaLink" id="Q13435"/>
<dbReference type="SIGNOR" id="Q13435"/>
<dbReference type="BioGRID-ORCS" id="10992">
    <property type="hits" value="789 hits in 1166 CRISPR screens"/>
</dbReference>
<dbReference type="CD-CODE" id="232F8A39">
    <property type="entry name" value="P-body"/>
</dbReference>
<dbReference type="CD-CODE" id="804901D1">
    <property type="entry name" value="Nuclear speckle"/>
</dbReference>
<dbReference type="CD-CODE" id="91857CE7">
    <property type="entry name" value="Nucleolus"/>
</dbReference>
<dbReference type="ChiTaRS" id="SF3B2">
    <property type="organism name" value="human"/>
</dbReference>
<dbReference type="EvolutionaryTrace" id="Q13435"/>
<dbReference type="GeneWiki" id="SF3B2"/>
<dbReference type="GenomeRNAi" id="10992"/>
<dbReference type="Pharos" id="Q13435">
    <property type="development level" value="Tbio"/>
</dbReference>
<dbReference type="PRO" id="PR:Q13435"/>
<dbReference type="Proteomes" id="UP000005640">
    <property type="component" value="Chromosome 11"/>
</dbReference>
<dbReference type="RNAct" id="Q13435">
    <property type="molecule type" value="protein"/>
</dbReference>
<dbReference type="Bgee" id="ENSG00000087365">
    <property type="expression patterns" value="Expressed in ventricular zone and 201 other cell types or tissues"/>
</dbReference>
<dbReference type="ExpressionAtlas" id="Q13435">
    <property type="expression patterns" value="baseline and differential"/>
</dbReference>
<dbReference type="GO" id="GO:0071013">
    <property type="term" value="C:catalytic step 2 spliceosome"/>
    <property type="evidence" value="ECO:0000314"/>
    <property type="project" value="UniProtKB"/>
</dbReference>
<dbReference type="GO" id="GO:0016607">
    <property type="term" value="C:nuclear speck"/>
    <property type="evidence" value="ECO:0000314"/>
    <property type="project" value="HPA"/>
</dbReference>
<dbReference type="GO" id="GO:0005654">
    <property type="term" value="C:nucleoplasm"/>
    <property type="evidence" value="ECO:0000304"/>
    <property type="project" value="Reactome"/>
</dbReference>
<dbReference type="GO" id="GO:0005634">
    <property type="term" value="C:nucleus"/>
    <property type="evidence" value="ECO:0000314"/>
    <property type="project" value="UniProtKB"/>
</dbReference>
<dbReference type="GO" id="GO:0071011">
    <property type="term" value="C:precatalytic spliceosome"/>
    <property type="evidence" value="ECO:0000318"/>
    <property type="project" value="GO_Central"/>
</dbReference>
<dbReference type="GO" id="GO:0005681">
    <property type="term" value="C:spliceosomal complex"/>
    <property type="evidence" value="ECO:0000314"/>
    <property type="project" value="HGNC-UCL"/>
</dbReference>
<dbReference type="GO" id="GO:0005689">
    <property type="term" value="C:U12-type spliceosomal complex"/>
    <property type="evidence" value="ECO:0000314"/>
    <property type="project" value="UniProtKB"/>
</dbReference>
<dbReference type="GO" id="GO:0005686">
    <property type="term" value="C:U2 snRNP"/>
    <property type="evidence" value="ECO:0000318"/>
    <property type="project" value="GO_Central"/>
</dbReference>
<dbReference type="GO" id="GO:0071005">
    <property type="term" value="C:U2-type precatalytic spliceosome"/>
    <property type="evidence" value="ECO:0000314"/>
    <property type="project" value="UniProtKB"/>
</dbReference>
<dbReference type="GO" id="GO:0005684">
    <property type="term" value="C:U2-type spliceosomal complex"/>
    <property type="evidence" value="ECO:0000314"/>
    <property type="project" value="UniProtKB"/>
</dbReference>
<dbReference type="GO" id="GO:0003723">
    <property type="term" value="F:RNA binding"/>
    <property type="evidence" value="ECO:0007005"/>
    <property type="project" value="UniProtKB"/>
</dbReference>
<dbReference type="GO" id="GO:0006397">
    <property type="term" value="P:mRNA processing"/>
    <property type="evidence" value="ECO:0000304"/>
    <property type="project" value="ProtInc"/>
</dbReference>
<dbReference type="GO" id="GO:0000398">
    <property type="term" value="P:mRNA splicing, via spliceosome"/>
    <property type="evidence" value="ECO:0000314"/>
    <property type="project" value="UniProtKB"/>
</dbReference>
<dbReference type="GO" id="GO:0008380">
    <property type="term" value="P:RNA splicing"/>
    <property type="evidence" value="ECO:0000304"/>
    <property type="project" value="ProtInc"/>
</dbReference>
<dbReference type="GO" id="GO:1903241">
    <property type="term" value="P:U2-type prespliceosome assembly"/>
    <property type="evidence" value="ECO:0000303"/>
    <property type="project" value="ComplexPortal"/>
</dbReference>
<dbReference type="InterPro" id="IPR007180">
    <property type="entry name" value="DUF382"/>
</dbReference>
<dbReference type="InterPro" id="IPR006568">
    <property type="entry name" value="PSP_pro-rich"/>
</dbReference>
<dbReference type="InterPro" id="IPR003034">
    <property type="entry name" value="SAP_dom"/>
</dbReference>
<dbReference type="InterPro" id="IPR052584">
    <property type="entry name" value="U2_snRNP_Complex_Component"/>
</dbReference>
<dbReference type="PANTHER" id="PTHR12785">
    <property type="entry name" value="SPLICING FACTOR 3B"/>
    <property type="match status" value="1"/>
</dbReference>
<dbReference type="PANTHER" id="PTHR12785:SF6">
    <property type="entry name" value="SPLICING FACTOR 3B SUBUNIT 2"/>
    <property type="match status" value="1"/>
</dbReference>
<dbReference type="Pfam" id="PF04037">
    <property type="entry name" value="DUF382"/>
    <property type="match status" value="1"/>
</dbReference>
<dbReference type="Pfam" id="PF04046">
    <property type="entry name" value="PSP"/>
    <property type="match status" value="1"/>
</dbReference>
<dbReference type="Pfam" id="PF02037">
    <property type="entry name" value="SAP"/>
    <property type="match status" value="1"/>
</dbReference>
<dbReference type="SMART" id="SM00581">
    <property type="entry name" value="PSP"/>
    <property type="match status" value="1"/>
</dbReference>
<dbReference type="SMART" id="SM00513">
    <property type="entry name" value="SAP"/>
    <property type="match status" value="1"/>
</dbReference>
<dbReference type="PROSITE" id="PS50800">
    <property type="entry name" value="SAP"/>
    <property type="match status" value="1"/>
</dbReference>
<evidence type="ECO:0000255" key="1"/>
<evidence type="ECO:0000255" key="2">
    <source>
        <dbReference type="PROSITE-ProRule" id="PRU00186"/>
    </source>
</evidence>
<evidence type="ECO:0000256" key="3">
    <source>
        <dbReference type="SAM" id="MobiDB-lite"/>
    </source>
</evidence>
<evidence type="ECO:0000269" key="4">
    <source>
    </source>
</evidence>
<evidence type="ECO:0000269" key="5">
    <source>
    </source>
</evidence>
<evidence type="ECO:0000269" key="6">
    <source>
    </source>
</evidence>
<evidence type="ECO:0000269" key="7">
    <source>
    </source>
</evidence>
<evidence type="ECO:0000269" key="8">
    <source>
    </source>
</evidence>
<evidence type="ECO:0000269" key="9">
    <source>
    </source>
</evidence>
<evidence type="ECO:0000269" key="10">
    <source>
    </source>
</evidence>
<evidence type="ECO:0000269" key="11">
    <source>
    </source>
</evidence>
<evidence type="ECO:0000269" key="12">
    <source>
    </source>
</evidence>
<evidence type="ECO:0000269" key="13">
    <source>
    </source>
</evidence>
<evidence type="ECO:0000269" key="14">
    <source>
    </source>
</evidence>
<evidence type="ECO:0000269" key="15">
    <source>
    </source>
</evidence>
<evidence type="ECO:0000269" key="16">
    <source>
    </source>
</evidence>
<evidence type="ECO:0000269" key="17">
    <source>
    </source>
</evidence>
<evidence type="ECO:0000269" key="18">
    <source>
    </source>
</evidence>
<evidence type="ECO:0000269" key="19">
    <source>
    </source>
</evidence>
<evidence type="ECO:0000269" key="20">
    <source>
    </source>
</evidence>
<evidence type="ECO:0000305" key="21"/>
<evidence type="ECO:0007744" key="22">
    <source>
        <dbReference type="PDB" id="6Y50"/>
    </source>
</evidence>
<evidence type="ECO:0007744" key="23">
    <source>
        <dbReference type="PDB" id="6Y53"/>
    </source>
</evidence>
<evidence type="ECO:0007744" key="24">
    <source>
        <dbReference type="PDB" id="6Y5Q"/>
    </source>
</evidence>
<evidence type="ECO:0007744" key="25">
    <source>
        <dbReference type="PDB" id="7DVQ"/>
    </source>
</evidence>
<evidence type="ECO:0007744" key="26">
    <source>
        <dbReference type="PDB" id="7Q3L"/>
    </source>
</evidence>
<evidence type="ECO:0007744" key="27">
    <source>
        <dbReference type="PDB" id="8HK1"/>
    </source>
</evidence>
<evidence type="ECO:0007744" key="28">
    <source>
    </source>
</evidence>
<evidence type="ECO:0007744" key="29">
    <source>
    </source>
</evidence>
<evidence type="ECO:0007744" key="30">
    <source>
    </source>
</evidence>
<evidence type="ECO:0007744" key="31">
    <source>
    </source>
</evidence>
<evidence type="ECO:0007744" key="32">
    <source>
    </source>
</evidence>
<evidence type="ECO:0007744" key="33">
    <source>
    </source>
</evidence>
<evidence type="ECO:0007744" key="34">
    <source>
    </source>
</evidence>
<evidence type="ECO:0007744" key="35">
    <source>
    </source>
</evidence>
<evidence type="ECO:0007744" key="36">
    <source>
    </source>
</evidence>
<evidence type="ECO:0007744" key="37">
    <source>
    </source>
</evidence>
<evidence type="ECO:0007744" key="38">
    <source>
    </source>
</evidence>
<evidence type="ECO:0007744" key="39">
    <source>
    </source>
</evidence>
<evidence type="ECO:0007744" key="40">
    <source>
    </source>
</evidence>
<evidence type="ECO:0007744" key="41">
    <source>
    </source>
</evidence>
<evidence type="ECO:0007744" key="42">
    <source>
    </source>
</evidence>
<evidence type="ECO:0007829" key="43">
    <source>
        <dbReference type="PDB" id="2DO5"/>
    </source>
</evidence>
<evidence type="ECO:0007829" key="44">
    <source>
        <dbReference type="PDB" id="7DVQ"/>
    </source>
</evidence>
<evidence type="ECO:0007829" key="45">
    <source>
        <dbReference type="PDB" id="7EVO"/>
    </source>
</evidence>
<evidence type="ECO:0007829" key="46">
    <source>
        <dbReference type="PDB" id="7ONB"/>
    </source>
</evidence>
<evidence type="ECO:0007829" key="47">
    <source>
        <dbReference type="PDB" id="7Q3L"/>
    </source>
</evidence>
<evidence type="ECO:0007829" key="48">
    <source>
        <dbReference type="PDB" id="7Q4O"/>
    </source>
</evidence>
<name>SF3B2_HUMAN</name>
<comment type="function">
    <text evidence="4 6 8 13 16 17 19">Component of the 17S U2 SnRNP complex of the spliceosome, a large ribonucleoprotein complex that removes introns from transcribed pre-mRNAs (PubMed:12234937, PubMed:32494006, PubMed:34822310). The 17S U2 SnRNP complex (1) directly participates in early spliceosome assembly and (2) mediates recognition of the intron branch site during pre-mRNA splicing by promoting the selection of the pre-mRNA branch-site adenosine, the nucleophile for the first step of splicing (PubMed:12234937, PubMed:32494006, PubMed:34822310). Within the 17S U2 SnRNP complex, SF3B2 is part of the SF3B subcomplex, which is required for 'A' complex assembly formed by the stable binding of U2 snRNP to the branchpoint sequence in pre-mRNA (PubMed:12234937, PubMed:27720643). Sequence independent binding of SF3A and SF3B subcomplexes upstream of the branch site is essential, it may anchor U2 snRNP to the pre-mRNA (PubMed:12234937). May also be involved in the assembly of the 'E' complex (PubMed:10882114). Also acts as a component of the minor spliceosome, which is involved in the splicing of U12-type introns in pre-mRNAs (PubMed:15146077, PubMed:33509932).</text>
</comment>
<comment type="subunit">
    <text evidence="5 6 7 8 10 12 13 14 15 16 17 19 20">Component of the 17S U2 SnRNP complex, a ribonucleoprotein complex that contains small nuclear RNA (snRNA) U2 and a number of specific proteins (PubMed:11991638, PubMed:12234937, PubMed:15146077, PubMed:32494006, PubMed:34822310, PubMed:36797247). Part of the SF3B subcomplex of the 17S U2 SnRNP complex (PubMed:12234937, PubMed:12738865, PubMed:27720643, PubMed:28541300). SF3B associates with the splicing subcomplex SF3A and a 12S RNA unit to form the U2 small nuclear ribonucleoproteins complex (U2 snRNP) (PubMed:12234937). Within the SF3B complex, interacts directly with SF3B4 (PubMed:25737013). Found in a complex with PRMT9, SF3B2 and SF3B4 (PubMed:25737013). Interacts (Arg-508-methylated form) with SMN1 (via Tudor domain) (PubMed:25737013). Interacts with RBM7 (PubMed:27905398). Interacts with ERCC6 (PubMed:26030138). Component of the minor spliceosome (PubMed:15146077, PubMed:33509932). Within this complex, interacts with SCNM1 and CRIPT (PubMed:33509932).</text>
</comment>
<comment type="subunit">
    <text evidence="9">(Microbial infection) Interacts with HIV-1 Vpr.</text>
</comment>
<comment type="interaction">
    <interactant intactId="EBI-749111">
        <id>Q13435</id>
    </interactant>
    <interactant intactId="EBI-347804">
        <id>P68400</id>
        <label>CSNK2A1</label>
    </interactant>
    <organismsDiffer>false</organismsDiffer>
    <experiments>2</experiments>
</comment>
<comment type="interaction">
    <interactant intactId="EBI-749111">
        <id>Q13435</id>
    </interactant>
    <interactant intactId="EBI-311446">
        <id>O60231</id>
        <label>DHX16</label>
    </interactant>
    <organismsDiffer>false</organismsDiffer>
    <experiments>2</experiments>
</comment>
<comment type="interaction">
    <interactant intactId="EBI-749111">
        <id>Q13435</id>
    </interactant>
    <interactant intactId="EBI-348399">
        <id>P22607</id>
        <label>FGFR3</label>
    </interactant>
    <organismsDiffer>false</organismsDiffer>
    <experiments>3</experiments>
</comment>
<comment type="interaction">
    <interactant intactId="EBI-749111">
        <id>Q13435</id>
    </interactant>
    <interactant intactId="EBI-710176">
        <id>Q70Z53</id>
        <label>FRA10AC1</label>
    </interactant>
    <organismsDiffer>false</organismsDiffer>
    <experiments>2</experiments>
</comment>
<comment type="interaction">
    <interactant intactId="EBI-749111">
        <id>Q13435</id>
    </interactant>
    <interactant intactId="EBI-357966">
        <id>P07910</id>
        <label>HNRNPC</label>
    </interactant>
    <organismsDiffer>false</organismsDiffer>
    <experiments>3</experiments>
</comment>
<comment type="interaction">
    <interactant intactId="EBI-749111">
        <id>Q13435</id>
    </interactant>
    <interactant intactId="EBI-350145">
        <id>P01112</id>
        <label>HRAS</label>
    </interactant>
    <organismsDiffer>false</organismsDiffer>
    <experiments>3</experiments>
</comment>
<comment type="interaction">
    <interactant intactId="EBI-749111">
        <id>Q13435</id>
    </interactant>
    <interactant intactId="EBI-710124">
        <id>O60341</id>
        <label>KDM1A</label>
    </interactant>
    <organismsDiffer>false</organismsDiffer>
    <experiments>2</experiments>
</comment>
<comment type="interaction">
    <interactant intactId="EBI-749111">
        <id>Q13435</id>
    </interactant>
    <interactant intactId="EBI-10962083">
        <id>Q6P2P2</id>
        <label>PRMT9</label>
    </interactant>
    <organismsDiffer>false</organismsDiffer>
    <experiments>11</experiments>
</comment>
<comment type="interaction">
    <interactant intactId="EBI-749111">
        <id>Q13435</id>
    </interactant>
    <interactant intactId="EBI-744322">
        <id>O43395</id>
        <label>PRPF3</label>
    </interactant>
    <organismsDiffer>false</organismsDiffer>
    <experiments>2</experiments>
</comment>
<comment type="interaction">
    <interactant intactId="EBI-749111">
        <id>Q13435</id>
    </interactant>
    <interactant intactId="EBI-538479">
        <id>Q6P2Q9</id>
        <label>PRPF8</label>
    </interactant>
    <organismsDiffer>false</organismsDiffer>
    <experiments>3</experiments>
</comment>
<comment type="interaction">
    <interactant intactId="EBI-749111">
        <id>Q13435</id>
    </interactant>
    <interactant intactId="EBI-746903">
        <id>Q9Y580</id>
        <label>RBM7</label>
    </interactant>
    <organismsDiffer>false</organismsDiffer>
    <experiments>5</experiments>
</comment>
<comment type="interaction">
    <interactant intactId="EBI-749111">
        <id>Q13435</id>
    </interactant>
    <interactant intactId="EBI-2130294">
        <id>O15541</id>
        <label>RNF113A</label>
    </interactant>
    <organismsDiffer>false</organismsDiffer>
    <experiments>2</experiments>
</comment>
<comment type="interaction">
    <interactant intactId="EBI-749111">
        <id>Q13435</id>
    </interactant>
    <interactant intactId="EBI-2462271">
        <id>Q15428</id>
        <label>SF3A2</label>
    </interactant>
    <organismsDiffer>false</organismsDiffer>
    <experiments>2</experiments>
</comment>
<comment type="interaction">
    <interactant intactId="EBI-749111">
        <id>Q13435</id>
    </interactant>
    <interactant intactId="EBI-348469">
        <id>Q15427</id>
        <label>SF3B4</label>
    </interactant>
    <organismsDiffer>false</organismsDiffer>
    <experiments>11</experiments>
</comment>
<comment type="interaction">
    <interactant intactId="EBI-749111">
        <id>Q13435</id>
    </interactant>
    <interactant intactId="EBI-750559">
        <id>O95391</id>
        <label>SLU7</label>
    </interactant>
    <organismsDiffer>false</organismsDiffer>
    <experiments>2</experiments>
</comment>
<comment type="interaction">
    <interactant intactId="EBI-749111">
        <id>Q13435</id>
    </interactant>
    <interactant intactId="EBI-395421">
        <id>Q16637</id>
        <label>SMN2</label>
    </interactant>
    <organismsDiffer>false</organismsDiffer>
    <experiments>4</experiments>
</comment>
<comment type="interaction">
    <interactant intactId="EBI-749111">
        <id>Q13435</id>
    </interactant>
    <interactant intactId="EBI-632461">
        <id>Q01081</id>
        <label>U2AF1</label>
    </interactant>
    <organismsDiffer>false</organismsDiffer>
    <experiments>2</experiments>
</comment>
<comment type="interaction">
    <interactant intactId="EBI-749111">
        <id>Q13435</id>
    </interactant>
    <interactant intactId="EBI-295232">
        <id>Q9HCS7</id>
        <label>XAB2</label>
    </interactant>
    <organismsDiffer>false</organismsDiffer>
    <experiments>2</experiments>
</comment>
<comment type="interaction">
    <interactant intactId="EBI-749111">
        <id>Q13435</id>
    </interactant>
    <interactant intactId="EBI-3920997">
        <id>Q96NB3</id>
        <label>ZNF830</label>
    </interactant>
    <organismsDiffer>false</organismsDiffer>
    <experiments>2</experiments>
</comment>
<comment type="interaction">
    <interactant intactId="EBI-749111">
        <id>Q13435</id>
    </interactant>
    <interactant intactId="EBI-25900580">
        <id>Q9Y649</id>
    </interactant>
    <organismsDiffer>false</organismsDiffer>
    <experiments>3</experiments>
</comment>
<comment type="subcellular location">
    <subcellularLocation>
        <location evidence="13 15">Nucleus</location>
    </subcellularLocation>
    <subcellularLocation>
        <location evidence="9">Nucleus speckle</location>
    </subcellularLocation>
</comment>
<comment type="PTM">
    <text evidence="10">Methylation at Arg-508 by PRMT9 is required for the interaction with SMN1.</text>
</comment>
<comment type="disease" evidence="18">
    <disease id="DI-06354">
        <name>Craniofacial microsomia 1</name>
        <acronym>CFM1</acronym>
        <description>A form of craniofacial microsomia, a disorder characterized by a spectrum of craniofacial malformations ranging from isolated microtia with or without aural atresia to underdevelopment of the mandible, maxilla, orbit, facial soft tissue, and/or facial nerve. CFM1 is an autosomal dominant form characterized by mandibular hypoplasia, microtia, facial and preauricular skin tags, epibulbar dermoids, and lateral oral clefts. Affected individuals also present skeletal and cardiac abnormalities.</description>
        <dbReference type="MIM" id="164210"/>
    </disease>
    <text>The disease is caused by variants affecting the gene represented in this entry.</text>
</comment>
<comment type="sequence caution" evidence="21">
    <conflict type="erroneous initiation">
        <sequence resource="EMBL-CDS" id="AAA97461"/>
    </conflict>
    <text>Truncated N-terminus.</text>
</comment>
<comment type="sequence caution" evidence="21">
    <conflict type="frameshift">
        <sequence resource="EMBL-CDS" id="AAA97461"/>
    </conflict>
</comment>
<comment type="sequence caution" evidence="21">
    <conflict type="miscellaneous discrepancy">
        <sequence resource="EMBL-CDS" id="AAH53577"/>
    </conflict>
    <text>Contaminating sequence. Potential poly-A sequence.</text>
</comment>
<comment type="sequence caution" evidence="21">
    <conflict type="erroneous initiation">
        <sequence resource="EMBL-CDS" id="BAG61831"/>
    </conflict>
    <text>Truncated N-terminus.</text>
</comment>
<protein>
    <recommendedName>
        <fullName>Splicing factor 3B subunit 2</fullName>
    </recommendedName>
    <alternativeName>
        <fullName>Pre-mRNA-splicing factor SF3b 145 kDa subunit</fullName>
        <shortName>SF3b145</shortName>
    </alternativeName>
    <alternativeName>
        <fullName>Spliceosome-associated protein 145</fullName>
        <shortName>SAP 145</shortName>
    </alternativeName>
</protein>
<reference key="1">
    <citation type="journal article" date="2004" name="Nat. Genet.">
        <title>Complete sequencing and characterization of 21,243 full-length human cDNAs.</title>
        <authorList>
            <person name="Ota T."/>
            <person name="Suzuki Y."/>
            <person name="Nishikawa T."/>
            <person name="Otsuki T."/>
            <person name="Sugiyama T."/>
            <person name="Irie R."/>
            <person name="Wakamatsu A."/>
            <person name="Hayashi K."/>
            <person name="Sato H."/>
            <person name="Nagai K."/>
            <person name="Kimura K."/>
            <person name="Makita H."/>
            <person name="Sekine M."/>
            <person name="Obayashi M."/>
            <person name="Nishi T."/>
            <person name="Shibahara T."/>
            <person name="Tanaka T."/>
            <person name="Ishii S."/>
            <person name="Yamamoto J."/>
            <person name="Saito K."/>
            <person name="Kawai Y."/>
            <person name="Isono Y."/>
            <person name="Nakamura Y."/>
            <person name="Nagahari K."/>
            <person name="Murakami K."/>
            <person name="Yasuda T."/>
            <person name="Iwayanagi T."/>
            <person name="Wagatsuma M."/>
            <person name="Shiratori A."/>
            <person name="Sudo H."/>
            <person name="Hosoiri T."/>
            <person name="Kaku Y."/>
            <person name="Kodaira H."/>
            <person name="Kondo H."/>
            <person name="Sugawara M."/>
            <person name="Takahashi M."/>
            <person name="Kanda K."/>
            <person name="Yokoi T."/>
            <person name="Furuya T."/>
            <person name="Kikkawa E."/>
            <person name="Omura Y."/>
            <person name="Abe K."/>
            <person name="Kamihara K."/>
            <person name="Katsuta N."/>
            <person name="Sato K."/>
            <person name="Tanikawa M."/>
            <person name="Yamazaki M."/>
            <person name="Ninomiya K."/>
            <person name="Ishibashi T."/>
            <person name="Yamashita H."/>
            <person name="Murakawa K."/>
            <person name="Fujimori K."/>
            <person name="Tanai H."/>
            <person name="Kimata M."/>
            <person name="Watanabe M."/>
            <person name="Hiraoka S."/>
            <person name="Chiba Y."/>
            <person name="Ishida S."/>
            <person name="Ono Y."/>
            <person name="Takiguchi S."/>
            <person name="Watanabe S."/>
            <person name="Yosida M."/>
            <person name="Hotuta T."/>
            <person name="Kusano J."/>
            <person name="Kanehori K."/>
            <person name="Takahashi-Fujii A."/>
            <person name="Hara H."/>
            <person name="Tanase T.-O."/>
            <person name="Nomura Y."/>
            <person name="Togiya S."/>
            <person name="Komai F."/>
            <person name="Hara R."/>
            <person name="Takeuchi K."/>
            <person name="Arita M."/>
            <person name="Imose N."/>
            <person name="Musashino K."/>
            <person name="Yuuki H."/>
            <person name="Oshima A."/>
            <person name="Sasaki N."/>
            <person name="Aotsuka S."/>
            <person name="Yoshikawa Y."/>
            <person name="Matsunawa H."/>
            <person name="Ichihara T."/>
            <person name="Shiohata N."/>
            <person name="Sano S."/>
            <person name="Moriya S."/>
            <person name="Momiyama H."/>
            <person name="Satoh N."/>
            <person name="Takami S."/>
            <person name="Terashima Y."/>
            <person name="Suzuki O."/>
            <person name="Nakagawa S."/>
            <person name="Senoh A."/>
            <person name="Mizoguchi H."/>
            <person name="Goto Y."/>
            <person name="Shimizu F."/>
            <person name="Wakebe H."/>
            <person name="Hishigaki H."/>
            <person name="Watanabe T."/>
            <person name="Sugiyama A."/>
            <person name="Takemoto M."/>
            <person name="Kawakami B."/>
            <person name="Yamazaki M."/>
            <person name="Watanabe K."/>
            <person name="Kumagai A."/>
            <person name="Itakura S."/>
            <person name="Fukuzumi Y."/>
            <person name="Fujimori Y."/>
            <person name="Komiyama M."/>
            <person name="Tashiro H."/>
            <person name="Tanigami A."/>
            <person name="Fujiwara T."/>
            <person name="Ono T."/>
            <person name="Yamada K."/>
            <person name="Fujii Y."/>
            <person name="Ozaki K."/>
            <person name="Hirao M."/>
            <person name="Ohmori Y."/>
            <person name="Kawabata A."/>
            <person name="Hikiji T."/>
            <person name="Kobatake N."/>
            <person name="Inagaki H."/>
            <person name="Ikema Y."/>
            <person name="Okamoto S."/>
            <person name="Okitani R."/>
            <person name="Kawakami T."/>
            <person name="Noguchi S."/>
            <person name="Itoh T."/>
            <person name="Shigeta K."/>
            <person name="Senba T."/>
            <person name="Matsumura K."/>
            <person name="Nakajima Y."/>
            <person name="Mizuno T."/>
            <person name="Morinaga M."/>
            <person name="Sasaki M."/>
            <person name="Togashi T."/>
            <person name="Oyama M."/>
            <person name="Hata H."/>
            <person name="Watanabe M."/>
            <person name="Komatsu T."/>
            <person name="Mizushima-Sugano J."/>
            <person name="Satoh T."/>
            <person name="Shirai Y."/>
            <person name="Takahashi Y."/>
            <person name="Nakagawa K."/>
            <person name="Okumura K."/>
            <person name="Nagase T."/>
            <person name="Nomura N."/>
            <person name="Kikuchi H."/>
            <person name="Masuho Y."/>
            <person name="Yamashita R."/>
            <person name="Nakai K."/>
            <person name="Yada T."/>
            <person name="Nakamura Y."/>
            <person name="Ohara O."/>
            <person name="Isogai T."/>
            <person name="Sugano S."/>
        </authorList>
    </citation>
    <scope>NUCLEOTIDE SEQUENCE [LARGE SCALE MRNA]</scope>
    <source>
        <tissue>Lymphoblast</tissue>
        <tissue>Peripheral blood</tissue>
    </source>
</reference>
<reference key="2">
    <citation type="journal article" date="2004" name="Genome Res.">
        <title>The status, quality, and expansion of the NIH full-length cDNA project: the Mammalian Gene Collection (MGC).</title>
        <authorList>
            <consortium name="The MGC Project Team"/>
        </authorList>
    </citation>
    <scope>NUCLEOTIDE SEQUENCE [LARGE SCALE MRNA]</scope>
    <source>
        <tissue>Eye</tissue>
        <tissue>Kidney</tissue>
        <tissue>Lung</tissue>
        <tissue>Testis</tissue>
    </source>
</reference>
<reference key="3">
    <citation type="journal article" date="1996" name="Genes Dev.">
        <title>Evidence that sequence-independent binding of highly conserved U2 snRNP proteins upstream of the branch site is required for assembly of spliceosomal complex A.</title>
        <authorList>
            <person name="Gozani O."/>
            <person name="Feld R."/>
            <person name="Reed R."/>
        </authorList>
    </citation>
    <scope>NUCLEOTIDE SEQUENCE [MRNA] OF 9-895</scope>
    <scope>PROTEIN SEQUENCE OF 174-182 AND 817-840</scope>
    <source>
        <tissue>Cervix carcinoma</tissue>
    </source>
</reference>
<reference key="4">
    <citation type="journal article" date="2000" name="Mol. Cell">
        <title>Functional association of U2 snRNP with the ATP-independent spliceosomal complex E.</title>
        <authorList>
            <person name="Das R."/>
            <person name="Zhou Z."/>
            <person name="Reed R."/>
        </authorList>
    </citation>
    <scope>CHARACTERIZATION OF THE SPLICEOSOME</scope>
</reference>
<reference key="5">
    <citation type="journal article" date="2002" name="EMBO J.">
        <title>Characterization of novel SF3b and 17S U2 snRNP proteins, including a human Prp5p homologue and an SF3b DEAD-box protein.</title>
        <authorList>
            <person name="Will C.L."/>
            <person name="Urlaub H."/>
            <person name="Achsel T."/>
            <person name="Gentzel M."/>
            <person name="Wilm M."/>
            <person name="Luehrmann R."/>
        </authorList>
    </citation>
    <scope>IDENTIFICATION IN THE SF3B COMPLEX</scope>
</reference>
<reference key="6">
    <citation type="journal article" date="2002" name="RNA">
        <title>Purification and characterization of native spliceosomes suitable for three-dimensional structural analysis.</title>
        <authorList>
            <person name="Jurica M.S."/>
            <person name="Licklider L.J."/>
            <person name="Gygi S.P."/>
            <person name="Grigorieff N."/>
            <person name="Moore M.J."/>
        </authorList>
    </citation>
    <scope>IDENTIFICATION BY MASS SPECTROMETRY</scope>
    <scope>IDENTIFICATION IN THE SPLICEOSOMAL C COMPLEX</scope>
</reference>
<reference key="7">
    <citation type="journal article" date="2003" name="Science">
        <title>Molecular architecture of the multiprotein splicing factor SF3b.</title>
        <authorList>
            <person name="Golas M.M."/>
            <person name="Sander B."/>
            <person name="Will C.L."/>
            <person name="Luhrmann R."/>
            <person name="Stark H."/>
        </authorList>
    </citation>
    <scope>IDENTIFICATION IN THE SF3B COMPLEX</scope>
    <scope>ELECTRON MICROSCOPY OF THE SF3B COMPLEX</scope>
</reference>
<reference key="8">
    <citation type="journal article" date="2004" name="RNA">
        <title>The human 18S U11/U12 snRNP contains a set of novel proteins not found in the U2-dependent spliceosome.</title>
        <authorList>
            <person name="Will C.L."/>
            <person name="Schneider C."/>
            <person name="Hossbach M."/>
            <person name="Urlaub H."/>
            <person name="Rauhut R."/>
            <person name="Elbashir S."/>
            <person name="Tuschl T."/>
            <person name="Luehrmann R."/>
        </authorList>
    </citation>
    <scope>IDENTIFICATION IN A COMPLEX WITH THE MINOR SPLICEOSOME</scope>
    <scope>FUNCTION</scope>
    <scope>IDENTIFICATION BY MASS SPECTROMETRY</scope>
</reference>
<reference key="9">
    <citation type="journal article" date="2006" name="Cell">
        <title>Global, in vivo, and site-specific phosphorylation dynamics in signaling networks.</title>
        <authorList>
            <person name="Olsen J.V."/>
            <person name="Blagoev B."/>
            <person name="Gnad F."/>
            <person name="Macek B."/>
            <person name="Kumar C."/>
            <person name="Mortensen P."/>
            <person name="Mann M."/>
        </authorList>
    </citation>
    <scope>PHOSPHORYLATION [LARGE SCALE ANALYSIS] AT SER-431; SER-435 AND SER-436</scope>
    <scope>IDENTIFICATION BY MASS SPECTROMETRY [LARGE SCALE ANALYSIS]</scope>
    <source>
        <tissue>Cervix carcinoma</tissue>
    </source>
</reference>
<reference key="10">
    <citation type="journal article" date="2006" name="Mol. Cell. Biol.">
        <title>Human immunodeficiency virus type 1 Vpr induces G2 checkpoint activation by interacting with the splicing factor SAP145.</title>
        <authorList>
            <person name="Terada Y."/>
            <person name="Yasuda Y."/>
        </authorList>
    </citation>
    <scope>INTERACTION WITH HIV-1 VPR (MICROBIAL INFECTION)</scope>
    <scope>SUBCELLULAR LOCATION</scope>
</reference>
<reference key="11">
    <citation type="journal article" date="2007" name="Science">
        <title>ATM and ATR substrate analysis reveals extensive protein networks responsive to DNA damage.</title>
        <authorList>
            <person name="Matsuoka S."/>
            <person name="Ballif B.A."/>
            <person name="Smogorzewska A."/>
            <person name="McDonald E.R. III"/>
            <person name="Hurov K.E."/>
            <person name="Luo J."/>
            <person name="Bakalarski C.E."/>
            <person name="Zhao Z."/>
            <person name="Solimini N."/>
            <person name="Lerenthal Y."/>
            <person name="Shiloh Y."/>
            <person name="Gygi S.P."/>
            <person name="Elledge S.J."/>
        </authorList>
    </citation>
    <scope>PHOSPHORYLATION [LARGE SCALE ANALYSIS] AT SER-289</scope>
    <scope>IDENTIFICATION BY MASS SPECTROMETRY [LARGE SCALE ANALYSIS]</scope>
    <source>
        <tissue>Embryonic kidney</tissue>
    </source>
</reference>
<reference key="12">
    <citation type="journal article" date="2008" name="Mol. Cell">
        <title>Kinase-selective enrichment enables quantitative phosphoproteomics of the kinome across the cell cycle.</title>
        <authorList>
            <person name="Daub H."/>
            <person name="Olsen J.V."/>
            <person name="Bairlein M."/>
            <person name="Gnad F."/>
            <person name="Oppermann F.S."/>
            <person name="Korner R."/>
            <person name="Greff Z."/>
            <person name="Keri G."/>
            <person name="Stemmann O."/>
            <person name="Mann M."/>
        </authorList>
    </citation>
    <scope>IDENTIFICATION BY MASS SPECTROMETRY [LARGE SCALE ANALYSIS]</scope>
    <source>
        <tissue>Cervix carcinoma</tissue>
    </source>
</reference>
<reference key="13">
    <citation type="journal article" date="2008" name="Proc. Natl. Acad. Sci. U.S.A.">
        <title>A quantitative atlas of mitotic phosphorylation.</title>
        <authorList>
            <person name="Dephoure N."/>
            <person name="Zhou C."/>
            <person name="Villen J."/>
            <person name="Beausoleil S.A."/>
            <person name="Bakalarski C.E."/>
            <person name="Elledge S.J."/>
            <person name="Gygi S.P."/>
        </authorList>
    </citation>
    <scope>PHOSPHORYLATION [LARGE SCALE ANALYSIS] AT SER-289; SER-307; SER-309; THR-311 AND THR-780</scope>
    <scope>IDENTIFICATION BY MASS SPECTROMETRY [LARGE SCALE ANALYSIS]</scope>
    <source>
        <tissue>Cervix carcinoma</tissue>
    </source>
</reference>
<reference key="14">
    <citation type="journal article" date="2008" name="Proteomics">
        <title>Large-scale phosphoproteome analysis of human liver tissue by enrichment and fractionation of phosphopeptides with strong anion exchange chromatography.</title>
        <authorList>
            <person name="Han G."/>
            <person name="Ye M."/>
            <person name="Zhou H."/>
            <person name="Jiang X."/>
            <person name="Feng S."/>
            <person name="Jiang X."/>
            <person name="Tian R."/>
            <person name="Wan D."/>
            <person name="Zou H."/>
            <person name="Gu J."/>
        </authorList>
    </citation>
    <scope>PHOSPHORYLATION [LARGE SCALE ANALYSIS] AT SER-431; SER-435 AND SER-436</scope>
    <scope>IDENTIFICATION BY MASS SPECTROMETRY [LARGE SCALE ANALYSIS]</scope>
    <source>
        <tissue>Liver</tissue>
    </source>
</reference>
<reference key="15">
    <citation type="journal article" date="2009" name="Anal. Chem.">
        <title>Lys-N and trypsin cover complementary parts of the phosphoproteome in a refined SCX-based approach.</title>
        <authorList>
            <person name="Gauci S."/>
            <person name="Helbig A.O."/>
            <person name="Slijper M."/>
            <person name="Krijgsveld J."/>
            <person name="Heck A.J."/>
            <person name="Mohammed S."/>
        </authorList>
    </citation>
    <scope>IDENTIFICATION BY MASS SPECTROMETRY [LARGE SCALE ANALYSIS]</scope>
</reference>
<reference key="16">
    <citation type="journal article" date="2009" name="Sci. Signal.">
        <title>Quantitative phosphoproteomic analysis of T cell receptor signaling reveals system-wide modulation of protein-protein interactions.</title>
        <authorList>
            <person name="Mayya V."/>
            <person name="Lundgren D.H."/>
            <person name="Hwang S.-I."/>
            <person name="Rezaul K."/>
            <person name="Wu L."/>
            <person name="Eng J.K."/>
            <person name="Rodionov V."/>
            <person name="Han D.K."/>
        </authorList>
    </citation>
    <scope>PHOSPHORYLATION [LARGE SCALE ANALYSIS] AT SER-307; SER-309; SER-360; SER-362 AND THR-780</scope>
    <scope>IDENTIFICATION BY MASS SPECTROMETRY [LARGE SCALE ANALYSIS]</scope>
    <source>
        <tissue>Leukemic T-cell</tissue>
    </source>
</reference>
<reference key="17">
    <citation type="journal article" date="2009" name="Science">
        <title>Lysine acetylation targets protein complexes and co-regulates major cellular functions.</title>
        <authorList>
            <person name="Choudhary C."/>
            <person name="Kumar C."/>
            <person name="Gnad F."/>
            <person name="Nielsen M.L."/>
            <person name="Rehman M."/>
            <person name="Walther T.C."/>
            <person name="Olsen J.V."/>
            <person name="Mann M."/>
        </authorList>
    </citation>
    <scope>ACETYLATION [LARGE SCALE ANALYSIS] AT LYS-275</scope>
    <scope>IDENTIFICATION BY MASS SPECTROMETRY [LARGE SCALE ANALYSIS]</scope>
</reference>
<reference key="18">
    <citation type="journal article" date="2010" name="Sci. Signal.">
        <title>Quantitative phosphoproteomics reveals widespread full phosphorylation site occupancy during mitosis.</title>
        <authorList>
            <person name="Olsen J.V."/>
            <person name="Vermeulen M."/>
            <person name="Santamaria A."/>
            <person name="Kumar C."/>
            <person name="Miller M.L."/>
            <person name="Jensen L.J."/>
            <person name="Gnad F."/>
            <person name="Cox J."/>
            <person name="Jensen T.S."/>
            <person name="Nigg E.A."/>
            <person name="Brunak S."/>
            <person name="Mann M."/>
        </authorList>
    </citation>
    <scope>PHOSPHORYLATION [LARGE SCALE ANALYSIS] AT SER-307; SER-309; SER-431; SER-435; SER-436 AND THR-780</scope>
    <scope>IDENTIFICATION BY MASS SPECTROMETRY [LARGE SCALE ANALYSIS]</scope>
    <source>
        <tissue>Cervix carcinoma</tissue>
    </source>
</reference>
<reference key="19">
    <citation type="journal article" date="2011" name="BMC Syst. Biol.">
        <title>Initial characterization of the human central proteome.</title>
        <authorList>
            <person name="Burkard T.R."/>
            <person name="Planyavsky M."/>
            <person name="Kaupe I."/>
            <person name="Breitwieser F.P."/>
            <person name="Buerckstuemmer T."/>
            <person name="Bennett K.L."/>
            <person name="Superti-Furga G."/>
            <person name="Colinge J."/>
        </authorList>
    </citation>
    <scope>IDENTIFICATION BY MASS SPECTROMETRY [LARGE SCALE ANALYSIS]</scope>
</reference>
<reference key="20">
    <citation type="journal article" date="2011" name="Sci. Signal.">
        <title>System-wide temporal characterization of the proteome and phosphoproteome of human embryonic stem cell differentiation.</title>
        <authorList>
            <person name="Rigbolt K.T."/>
            <person name="Prokhorova T.A."/>
            <person name="Akimov V."/>
            <person name="Henningsen J."/>
            <person name="Johansen P.T."/>
            <person name="Kratchmarova I."/>
            <person name="Kassem M."/>
            <person name="Mann M."/>
            <person name="Olsen J.V."/>
            <person name="Blagoev B."/>
        </authorList>
    </citation>
    <scope>PHOSPHORYLATION [LARGE SCALE ANALYSIS] AT SER-431; SER-435 AND SER-436</scope>
    <scope>IDENTIFICATION BY MASS SPECTROMETRY [LARGE SCALE ANALYSIS]</scope>
</reference>
<reference key="21">
    <citation type="journal article" date="2013" name="J. Proteome Res.">
        <title>Toward a comprehensive characterization of a human cancer cell phosphoproteome.</title>
        <authorList>
            <person name="Zhou H."/>
            <person name="Di Palma S."/>
            <person name="Preisinger C."/>
            <person name="Peng M."/>
            <person name="Polat A.N."/>
            <person name="Heck A.J."/>
            <person name="Mohammed S."/>
        </authorList>
    </citation>
    <scope>PHOSPHORYLATION [LARGE SCALE ANALYSIS] AT SER-289; THR-298; SER-307; SER-309; THR-311; SER-317; SER-431; SER-435; SER-436; THR-780 AND SER-861</scope>
    <scope>IDENTIFICATION BY MASS SPECTROMETRY [LARGE SCALE ANALYSIS]</scope>
    <source>
        <tissue>Cervix carcinoma</tissue>
        <tissue>Erythroleukemia</tissue>
    </source>
</reference>
<reference key="22">
    <citation type="journal article" date="2014" name="J. Proteomics">
        <title>An enzyme assisted RP-RPLC approach for in-depth analysis of human liver phosphoproteome.</title>
        <authorList>
            <person name="Bian Y."/>
            <person name="Song C."/>
            <person name="Cheng K."/>
            <person name="Dong M."/>
            <person name="Wang F."/>
            <person name="Huang J."/>
            <person name="Sun D."/>
            <person name="Wang L."/>
            <person name="Ye M."/>
            <person name="Zou H."/>
        </authorList>
    </citation>
    <scope>PHOSPHORYLATION [LARGE SCALE ANALYSIS] AT THR-311; SER-431; SER-435 AND SER-436</scope>
    <scope>IDENTIFICATION BY MASS SPECTROMETRY [LARGE SCALE ANALYSIS]</scope>
    <source>
        <tissue>Liver</tissue>
    </source>
</reference>
<reference key="23">
    <citation type="journal article" date="2014" name="Mol. Cell. Proteomics">
        <title>Immunoaffinity enrichment and mass spectrometry analysis of protein methylation.</title>
        <authorList>
            <person name="Guo A."/>
            <person name="Gu H."/>
            <person name="Zhou J."/>
            <person name="Mulhern D."/>
            <person name="Wang Y."/>
            <person name="Lee K.A."/>
            <person name="Yang V."/>
            <person name="Aguiar M."/>
            <person name="Kornhauser J."/>
            <person name="Jia X."/>
            <person name="Ren J."/>
            <person name="Beausoleil S.A."/>
            <person name="Silva J.C."/>
            <person name="Vemulapalli V."/>
            <person name="Bedford M.T."/>
            <person name="Comb M.J."/>
        </authorList>
    </citation>
    <scope>METHYLATION [LARGE SCALE ANALYSIS] AT ARG-222; ARG-245; ARG-247 AND ARG-515</scope>
    <scope>IDENTIFICATION BY MASS SPECTROMETRY [LARGE SCALE ANALYSIS]</scope>
    <source>
        <tissue>Colon carcinoma</tissue>
    </source>
</reference>
<reference key="24">
    <citation type="journal article" date="2014" name="Nat. Struct. Mol. Biol.">
        <title>Uncovering global SUMOylation signaling networks in a site-specific manner.</title>
        <authorList>
            <person name="Hendriks I.A."/>
            <person name="D'Souza R.C."/>
            <person name="Yang B."/>
            <person name="Verlaan-de Vries M."/>
            <person name="Mann M."/>
            <person name="Vertegaal A.C."/>
        </authorList>
    </citation>
    <scope>SUMOYLATION [LARGE SCALE ANALYSIS] AT LYS-412</scope>
    <scope>IDENTIFICATION BY MASS SPECTROMETRY [LARGE SCALE ANALYSIS]</scope>
</reference>
<reference key="25">
    <citation type="journal article" date="2015" name="Cell Rep.">
        <title>SUMO-2 orchestrates chromatin modifiers in response to DNA damage.</title>
        <authorList>
            <person name="Hendriks I.A."/>
            <person name="Treffers L.W."/>
            <person name="Verlaan-de Vries M."/>
            <person name="Olsen J.V."/>
            <person name="Vertegaal A.C."/>
        </authorList>
    </citation>
    <scope>SUMOYLATION [LARGE SCALE ANALYSIS] AT LYS-400</scope>
    <scope>IDENTIFICATION BY MASS SPECTROMETRY [LARGE SCALE ANALYSIS]</scope>
</reference>
<reference key="26">
    <citation type="journal article" date="2015" name="Mol. Cell. Proteomics">
        <title>System-wide analysis of SUMOylation dynamics in response to replication stress reveals novel small ubiquitin-like modified target proteins and acceptor lysines relevant for genome stability.</title>
        <authorList>
            <person name="Xiao Z."/>
            <person name="Chang J.G."/>
            <person name="Hendriks I.A."/>
            <person name="Sigurdsson J.O."/>
            <person name="Olsen J.V."/>
            <person name="Vertegaal A.C."/>
        </authorList>
    </citation>
    <scope>SUMOYLATION [LARGE SCALE ANALYSIS] AT LYS-400</scope>
    <scope>IDENTIFICATION BY MASS SPECTROMETRY [LARGE SCALE ANALYSIS]</scope>
</reference>
<reference key="27">
    <citation type="journal article" date="2017" name="Nat. Struct. Mol. Biol.">
        <title>Site-specific mapping of the human SUMO proteome reveals co-modification with phosphorylation.</title>
        <authorList>
            <person name="Hendriks I.A."/>
            <person name="Lyon D."/>
            <person name="Young C."/>
            <person name="Jensen L.J."/>
            <person name="Vertegaal A.C."/>
            <person name="Nielsen M.L."/>
        </authorList>
    </citation>
    <scope>SUMOYLATION [LARGE SCALE ANALYSIS] AT LYS-10; LYS-280; LYS-400; LYS-412; LYS-492; LYS-543; LYS-770; LYS-790; LYS-843 AND LYS-857</scope>
    <scope>IDENTIFICATION BY MASS SPECTROMETRY [LARGE SCALE ANALYSIS]</scope>
</reference>
<reference key="28">
    <citation type="submission" date="2007-04" db="PDB data bank">
        <title>Solution structure of the SAP domain of human splicing factor 3B subunit 2.</title>
        <authorList>
            <consortium name="RIKEN structural genomics initiative (RSGI)"/>
        </authorList>
    </citation>
    <scope>STRUCTURE BY NMR OF 24-68</scope>
</reference>
<reference key="29">
    <citation type="journal article" date="2015" name="Nat. Commun.">
        <title>PRMT9 is a type II methyltransferase that methylates the splicing factor SAP145.</title>
        <authorList>
            <person name="Yang Y."/>
            <person name="Hadjikyriacou A."/>
            <person name="Xia Z."/>
            <person name="Gayatri S."/>
            <person name="Kim D."/>
            <person name="Zurita-Lopez C."/>
            <person name="Kelly R."/>
            <person name="Guo A."/>
            <person name="Li W."/>
            <person name="Clarke S.G."/>
            <person name="Bedford M.T."/>
        </authorList>
    </citation>
    <scope>METHYLATION AT ARG-508 BY PRMT9</scope>
    <scope>MUTAGENESIS OF ARG-471; ARG-495; ARG-502; ARG-508; ARG-515; ARG-530 AND ARG-537</scope>
    <scope>INTERACTION WITH SMN1</scope>
    <scope>IDENTIFICATION IN A COMPLEX WITH PRMT9; SF3B2 AND SF3B4</scope>
</reference>
<reference key="30">
    <citation type="journal article" date="2015" name="J. Biol. Chem.">
        <title>Unique features of human protein arginine methyltransferase 9 (PRMT9) and its substrate RNA splicing factor SF3B2.</title>
        <authorList>
            <person name="Hadjikyriacou A."/>
            <person name="Yang Y."/>
            <person name="Espejo A."/>
            <person name="Bedford M.T."/>
            <person name="Clarke S.G."/>
        </authorList>
    </citation>
    <scope>MUTAGENESIS OF PHE-506; LYS-507; ARG-508; LYS-509 AND TYR-510</scope>
</reference>
<reference key="31">
    <citation type="journal article" date="2015" name="PLoS ONE">
        <title>Identification of Novel Proteins Co-Purifying with Cockayne Syndrome Group B (CSB) Reveals Potential Roles for CSB in RNA Metabolism and Chromatin Dynamics.</title>
        <authorList>
            <person name="Nicolai S."/>
            <person name="Filippi S."/>
            <person name="Caputo M."/>
            <person name="Cipak L."/>
            <person name="Gregan J."/>
            <person name="Ammerer G."/>
            <person name="Frontini M."/>
            <person name="Willems D."/>
            <person name="Prantera G."/>
            <person name="Balajee A.S."/>
            <person name="Proietti-De-Santis L."/>
        </authorList>
    </citation>
    <scope>INTERACTION WITH ERCC6</scope>
</reference>
<reference key="32">
    <citation type="journal article" date="2016" name="Mol. Cell">
        <title>Molecular architecture of SF3b and structural consequences of its cancer-related mutations.</title>
        <authorList>
            <person name="Cretu C."/>
            <person name="Schmitzova J."/>
            <person name="Ponce-Salvatierra A."/>
            <person name="Dybkov O."/>
            <person name="De Laurentiis E.I."/>
            <person name="Sharma K."/>
            <person name="Will C.L."/>
            <person name="Urlaub H."/>
            <person name="Luehrmann R."/>
            <person name="Pena V."/>
        </authorList>
    </citation>
    <scope>FUNCTION</scope>
    <scope>IDENTIFICATION IN THE SF3B COMPLEX</scope>
    <scope>SUBUNIT</scope>
    <scope>SUBCELLULAR LOCATION</scope>
</reference>
<reference key="33">
    <citation type="journal article" date="2016" name="Nat. Commun.">
        <title>Structure of the RBM7-ZCCHC8 core of the NEXT complex reveals connections to splicing factors.</title>
        <authorList>
            <person name="Falk S."/>
            <person name="Finogenova K."/>
            <person name="Melko M."/>
            <person name="Benda C."/>
            <person name="Lykke-Andersen S."/>
            <person name="Jensen T.H."/>
            <person name="Conti E."/>
        </authorList>
    </citation>
    <scope>INTERACTION WITH RBM7</scope>
</reference>
<reference key="34">
    <citation type="journal article" date="2017" name="Nat. Commun.">
        <title>Splicing modulators act at the branch point adenosine binding pocket defined by the PHF5A-SF3b complex.</title>
        <authorList>
            <person name="Teng T."/>
            <person name="Tsai J.H."/>
            <person name="Puyang X."/>
            <person name="Seiler M."/>
            <person name="Peng S."/>
            <person name="Prajapati S."/>
            <person name="Aird D."/>
            <person name="Buonamici S."/>
            <person name="Caleb B."/>
            <person name="Chan B."/>
            <person name="Corson L."/>
            <person name="Feala J."/>
            <person name="Fekkes P."/>
            <person name="Gerard B."/>
            <person name="Karr C."/>
            <person name="Korpal M."/>
            <person name="Liu X."/>
            <person name="Lowe J.T."/>
            <person name="Mizui Y."/>
            <person name="Palacino J."/>
            <person name="Park E."/>
            <person name="Smith P.G."/>
            <person name="Subramanian V."/>
            <person name="Wu Z.J."/>
            <person name="Zou J."/>
            <person name="Yu L."/>
            <person name="Chicas A."/>
            <person name="Warmuth M."/>
            <person name="Larsen N."/>
            <person name="Zhu P."/>
        </authorList>
    </citation>
    <scope>IDENTIFICATION BY MASS SPECTROMETRY</scope>
    <scope>IDENTIFICATION IN THE SF3B COMPLEX</scope>
    <scope>SUBCELLULAR LOCATION</scope>
</reference>
<reference evidence="22 23 24" key="35">
    <citation type="journal article" date="2020" name="Nature">
        <title>Molecular architecture of the human 17S U2 snRNP.</title>
        <authorList>
            <person name="Zhang Z."/>
            <person name="Will C.L."/>
            <person name="Bertram K."/>
            <person name="Dybkov O."/>
            <person name="Hartmuth K."/>
            <person name="Agafonov D.E."/>
            <person name="Hofele R."/>
            <person name="Urlaub H."/>
            <person name="Kastner B."/>
            <person name="Luehrmann R."/>
            <person name="Stark H."/>
        </authorList>
    </citation>
    <scope>STRUCTURE BY ELECTRON MICROSCOPY (4.10 ANGSTROMS) IN COMPLEX WITH THE 17S U2 SNRNP COMPLEX</scope>
    <scope>FUNCTION</scope>
    <scope>IDENTIFICATION IN THE 17S U2 SNRNP COMPLEX</scope>
</reference>
<reference evidence="25" key="36">
    <citation type="journal article" date="2021" name="Science">
        <title>Structure of the activated human minor spliceosome.</title>
        <authorList>
            <person name="Bai R."/>
            <person name="Wan R."/>
            <person name="Wang L."/>
            <person name="Xu K."/>
            <person name="Zhang Q."/>
            <person name="Lei J."/>
            <person name="Shi Y."/>
        </authorList>
    </citation>
    <scope>STRUCTURE BY ELECTRON MICROSCOPY (2.89 ANGSTROMS)</scope>
    <scope>FUNCTION</scope>
    <scope>SUBUNIT</scope>
</reference>
<reference evidence="26" key="37">
    <citation type="journal article" date="2022" name="Science">
        <title>Structural basis of branch site recognition by the human spliceosome.</title>
        <authorList>
            <person name="Tholen J."/>
            <person name="Razew M."/>
            <person name="Weis F."/>
            <person name="Galej W.P."/>
        </authorList>
    </citation>
    <scope>STRUCTURE BY ELECTRON MICROSCOPY (2.30 ANGSTROMS) IN COMPLEX WITH THE 17S U2 SNRNP COMPLEX</scope>
    <scope>FUNCTION</scope>
    <scope>IDENTIFICATION IN THE 17S U2 SNRNP COMPLEX</scope>
</reference>
<reference evidence="27" key="38">
    <citation type="journal article" date="2023" name="Nat. Commun.">
        <title>Mechanisms of the RNA helicases DDX42 and DDX46 in human U2 snRNP assembly.</title>
        <authorList>
            <person name="Yang F."/>
            <person name="Bian T."/>
            <person name="Zhan X."/>
            <person name="Chen Z."/>
            <person name="Xing Z."/>
            <person name="Larsen N.A."/>
            <person name="Zhang X."/>
            <person name="Shi Y."/>
        </authorList>
    </citation>
    <scope>STRUCTURE BY ELECTRON MICROSCOPY (2.70 ANGSTROMS) IN COMPLEX WITH THE 17S U2 SNRNP COMPLEX</scope>
    <scope>IDENTIFICATION IN THE 17S U2 SNRNP COMPLEX</scope>
</reference>
<reference key="39">
    <citation type="journal article" date="2021" name="Nat. Commun.">
        <title>Haploinsufficiency of SF3B2 causes craniofacial microsomia.</title>
        <authorList>
            <person name="Timberlake A.T."/>
            <person name="Griffin C."/>
            <person name="Heike C.L."/>
            <person name="Hing A.V."/>
            <person name="Cunningham M.L."/>
            <person name="Chitayat D."/>
            <person name="Davis M.R."/>
            <person name="Doust S.J."/>
            <person name="Drake A.F."/>
            <person name="Duenas-Roque M.M."/>
            <person name="Goldblatt J."/>
            <person name="Gustafson J.A."/>
            <person name="Hurtado-Villa P."/>
            <person name="Johns A."/>
            <person name="Karp N."/>
            <person name="Laing N.G."/>
            <person name="Magee L."/>
            <person name="Mullegama S.V."/>
            <person name="Pachajoa H."/>
            <person name="Porras-Hurtado G.L."/>
            <person name="Schnur R.E."/>
            <person name="Slee J."/>
            <person name="Singer S.L."/>
            <person name="Staffenberg D.A."/>
            <person name="Timms A.E."/>
            <person name="Wise C.A."/>
            <person name="Zarante I."/>
            <person name="Saint-Jeannet J.P."/>
            <person name="Luquetti D.V."/>
        </authorList>
    </citation>
    <scope>INVOLVEMENT IN CFM1</scope>
    <scope>VARIANTS CFM1 103-GLN--PHE-895 DEL AND 638-ARG--PHE-895 DEL</scope>
</reference>
<proteinExistence type="evidence at protein level"/>